<sequence length="213" mass="23643">MEQYKRDFIEFALSRNVLKFGEFTLKSGRKSPYFFNAGLFNTGADLARLGEFYAAAIQASAVDFDVVFGPAYKGIPIGTSVSVALFNRYGIDKPVCFNRKEVKDHGEGGNLIGSPLQGKILLVDDVITAGTAIRESMELISANQAELAAVLIALNRKERGKGELSAIQEVERDYQCQVLSIIDLDDLMQFIEQDPRYSSHLPEMRAYRAEFGV</sequence>
<name>PYRE_HAEIN</name>
<proteinExistence type="evidence at protein level"/>
<keyword id="KW-0328">Glycosyltransferase</keyword>
<keyword id="KW-0460">Magnesium</keyword>
<keyword id="KW-0665">Pyrimidine biosynthesis</keyword>
<keyword id="KW-1185">Reference proteome</keyword>
<keyword id="KW-0808">Transferase</keyword>
<accession>P43855</accession>
<protein>
    <recommendedName>
        <fullName evidence="1">Orotate phosphoribosyltransferase</fullName>
        <shortName evidence="1">OPRT</shortName>
        <shortName evidence="1">OPRTase</shortName>
        <ecNumber evidence="1">2.4.2.10</ecNumber>
    </recommendedName>
</protein>
<gene>
    <name evidence="1" type="primary">pyrE</name>
    <name type="ordered locus">HI_0272</name>
</gene>
<feature type="chain" id="PRO_0000110700" description="Orotate phosphoribosyltransferase">
    <location>
        <begin position="1"/>
        <end position="213"/>
    </location>
</feature>
<feature type="binding site" description="in other chain" evidence="1">
    <location>
        <position position="26"/>
    </location>
    <ligand>
        <name>5-phospho-alpha-D-ribose 1-diphosphate</name>
        <dbReference type="ChEBI" id="CHEBI:58017"/>
        <note>ligand shared between dimeric partners</note>
    </ligand>
</feature>
<feature type="binding site" evidence="1">
    <location>
        <begin position="34"/>
        <end position="35"/>
    </location>
    <ligand>
        <name>orotate</name>
        <dbReference type="ChEBI" id="CHEBI:30839"/>
    </ligand>
</feature>
<feature type="binding site" description="in other chain" evidence="1">
    <location>
        <begin position="72"/>
        <end position="73"/>
    </location>
    <ligand>
        <name>5-phospho-alpha-D-ribose 1-diphosphate</name>
        <dbReference type="ChEBI" id="CHEBI:58017"/>
        <note>ligand shared between dimeric partners</note>
    </ligand>
</feature>
<feature type="binding site" evidence="1">
    <location>
        <position position="99"/>
    </location>
    <ligand>
        <name>5-phospho-alpha-D-ribose 1-diphosphate</name>
        <dbReference type="ChEBI" id="CHEBI:58017"/>
        <note>ligand shared between dimeric partners</note>
    </ligand>
</feature>
<feature type="binding site" description="in other chain" evidence="1">
    <location>
        <position position="100"/>
    </location>
    <ligand>
        <name>5-phospho-alpha-D-ribose 1-diphosphate</name>
        <dbReference type="ChEBI" id="CHEBI:58017"/>
        <note>ligand shared between dimeric partners</note>
    </ligand>
</feature>
<feature type="binding site" evidence="1">
    <location>
        <position position="103"/>
    </location>
    <ligand>
        <name>5-phospho-alpha-D-ribose 1-diphosphate</name>
        <dbReference type="ChEBI" id="CHEBI:58017"/>
        <note>ligand shared between dimeric partners</note>
    </ligand>
</feature>
<feature type="binding site" evidence="1">
    <location>
        <position position="105"/>
    </location>
    <ligand>
        <name>5-phospho-alpha-D-ribose 1-diphosphate</name>
        <dbReference type="ChEBI" id="CHEBI:58017"/>
        <note>ligand shared between dimeric partners</note>
    </ligand>
</feature>
<feature type="binding site" description="in other chain" evidence="1">
    <location>
        <begin position="124"/>
        <end position="132"/>
    </location>
    <ligand>
        <name>5-phospho-alpha-D-ribose 1-diphosphate</name>
        <dbReference type="ChEBI" id="CHEBI:58017"/>
        <note>ligand shared between dimeric partners</note>
    </ligand>
</feature>
<feature type="binding site" evidence="1">
    <location>
        <position position="128"/>
    </location>
    <ligand>
        <name>orotate</name>
        <dbReference type="ChEBI" id="CHEBI:30839"/>
    </ligand>
</feature>
<feature type="binding site" evidence="1">
    <location>
        <position position="156"/>
    </location>
    <ligand>
        <name>orotate</name>
        <dbReference type="ChEBI" id="CHEBI:30839"/>
    </ligand>
</feature>
<dbReference type="EC" id="2.4.2.10" evidence="1"/>
<dbReference type="EMBL" id="L42023">
    <property type="protein sequence ID" value="AAC21938.1"/>
    <property type="molecule type" value="Genomic_DNA"/>
</dbReference>
<dbReference type="PIR" id="I64058">
    <property type="entry name" value="I64058"/>
</dbReference>
<dbReference type="RefSeq" id="NP_438441.1">
    <property type="nucleotide sequence ID" value="NC_000907.1"/>
</dbReference>
<dbReference type="SMR" id="P43855"/>
<dbReference type="STRING" id="71421.HI_0272"/>
<dbReference type="EnsemblBacteria" id="AAC21938">
    <property type="protein sequence ID" value="AAC21938"/>
    <property type="gene ID" value="HI_0272"/>
</dbReference>
<dbReference type="KEGG" id="hin:HI_0272"/>
<dbReference type="PATRIC" id="fig|71421.8.peg.287"/>
<dbReference type="eggNOG" id="COG0461">
    <property type="taxonomic scope" value="Bacteria"/>
</dbReference>
<dbReference type="HOGENOM" id="CLU_074878_0_1_6"/>
<dbReference type="OrthoDB" id="9779060at2"/>
<dbReference type="PhylomeDB" id="P43855"/>
<dbReference type="BioCyc" id="HINF71421:G1GJ1-287-MONOMER"/>
<dbReference type="UniPathway" id="UPA00070">
    <property type="reaction ID" value="UER00119"/>
</dbReference>
<dbReference type="Proteomes" id="UP000000579">
    <property type="component" value="Chromosome"/>
</dbReference>
<dbReference type="GO" id="GO:0005737">
    <property type="term" value="C:cytoplasm"/>
    <property type="evidence" value="ECO:0000318"/>
    <property type="project" value="GO_Central"/>
</dbReference>
<dbReference type="GO" id="GO:0000287">
    <property type="term" value="F:magnesium ion binding"/>
    <property type="evidence" value="ECO:0007669"/>
    <property type="project" value="UniProtKB-UniRule"/>
</dbReference>
<dbReference type="GO" id="GO:0004588">
    <property type="term" value="F:orotate phosphoribosyltransferase activity"/>
    <property type="evidence" value="ECO:0000318"/>
    <property type="project" value="GO_Central"/>
</dbReference>
<dbReference type="GO" id="GO:0006207">
    <property type="term" value="P:'de novo' pyrimidine nucleobase biosynthetic process"/>
    <property type="evidence" value="ECO:0000318"/>
    <property type="project" value="GO_Central"/>
</dbReference>
<dbReference type="GO" id="GO:0044205">
    <property type="term" value="P:'de novo' UMP biosynthetic process"/>
    <property type="evidence" value="ECO:0007669"/>
    <property type="project" value="UniProtKB-UniRule"/>
</dbReference>
<dbReference type="GO" id="GO:0006221">
    <property type="term" value="P:pyrimidine nucleotide biosynthetic process"/>
    <property type="evidence" value="ECO:0000318"/>
    <property type="project" value="GO_Central"/>
</dbReference>
<dbReference type="GO" id="GO:0046132">
    <property type="term" value="P:pyrimidine ribonucleoside biosynthetic process"/>
    <property type="evidence" value="ECO:0000318"/>
    <property type="project" value="GO_Central"/>
</dbReference>
<dbReference type="CDD" id="cd06223">
    <property type="entry name" value="PRTases_typeI"/>
    <property type="match status" value="1"/>
</dbReference>
<dbReference type="FunFam" id="3.40.50.2020:FF:000008">
    <property type="entry name" value="Orotate phosphoribosyltransferase"/>
    <property type="match status" value="1"/>
</dbReference>
<dbReference type="Gene3D" id="3.40.50.2020">
    <property type="match status" value="1"/>
</dbReference>
<dbReference type="HAMAP" id="MF_01208">
    <property type="entry name" value="PyrE"/>
    <property type="match status" value="1"/>
</dbReference>
<dbReference type="InterPro" id="IPR023031">
    <property type="entry name" value="OPRT"/>
</dbReference>
<dbReference type="InterPro" id="IPR004467">
    <property type="entry name" value="Or_phspho_trans_dom"/>
</dbReference>
<dbReference type="InterPro" id="IPR000836">
    <property type="entry name" value="PRibTrfase_dom"/>
</dbReference>
<dbReference type="InterPro" id="IPR029057">
    <property type="entry name" value="PRTase-like"/>
</dbReference>
<dbReference type="NCBIfam" id="TIGR00336">
    <property type="entry name" value="pyrE"/>
    <property type="match status" value="1"/>
</dbReference>
<dbReference type="PANTHER" id="PTHR46683">
    <property type="entry name" value="OROTATE PHOSPHORIBOSYLTRANSFERASE 1-RELATED"/>
    <property type="match status" value="1"/>
</dbReference>
<dbReference type="PANTHER" id="PTHR46683:SF1">
    <property type="entry name" value="OROTATE PHOSPHORIBOSYLTRANSFERASE 1-RELATED"/>
    <property type="match status" value="1"/>
</dbReference>
<dbReference type="Pfam" id="PF00156">
    <property type="entry name" value="Pribosyltran"/>
    <property type="match status" value="1"/>
</dbReference>
<dbReference type="SUPFAM" id="SSF53271">
    <property type="entry name" value="PRTase-like"/>
    <property type="match status" value="1"/>
</dbReference>
<dbReference type="PROSITE" id="PS00103">
    <property type="entry name" value="PUR_PYR_PR_TRANSFER"/>
    <property type="match status" value="1"/>
</dbReference>
<organism>
    <name type="scientific">Haemophilus influenzae (strain ATCC 51907 / DSM 11121 / KW20 / Rd)</name>
    <dbReference type="NCBI Taxonomy" id="71421"/>
    <lineage>
        <taxon>Bacteria</taxon>
        <taxon>Pseudomonadati</taxon>
        <taxon>Pseudomonadota</taxon>
        <taxon>Gammaproteobacteria</taxon>
        <taxon>Pasteurellales</taxon>
        <taxon>Pasteurellaceae</taxon>
        <taxon>Haemophilus</taxon>
    </lineage>
</organism>
<reference key="1">
    <citation type="journal article" date="1995" name="Science">
        <title>Whole-genome random sequencing and assembly of Haemophilus influenzae Rd.</title>
        <authorList>
            <person name="Fleischmann R.D."/>
            <person name="Adams M.D."/>
            <person name="White O."/>
            <person name="Clayton R.A."/>
            <person name="Kirkness E.F."/>
            <person name="Kerlavage A.R."/>
            <person name="Bult C.J."/>
            <person name="Tomb J.-F."/>
            <person name="Dougherty B.A."/>
            <person name="Merrick J.M."/>
            <person name="McKenney K."/>
            <person name="Sutton G.G."/>
            <person name="FitzHugh W."/>
            <person name="Fields C.A."/>
            <person name="Gocayne J.D."/>
            <person name="Scott J.D."/>
            <person name="Shirley R."/>
            <person name="Liu L.-I."/>
            <person name="Glodek A."/>
            <person name="Kelley J.M."/>
            <person name="Weidman J.F."/>
            <person name="Phillips C.A."/>
            <person name="Spriggs T."/>
            <person name="Hedblom E."/>
            <person name="Cotton M.D."/>
            <person name="Utterback T.R."/>
            <person name="Hanna M.C."/>
            <person name="Nguyen D.T."/>
            <person name="Saudek D.M."/>
            <person name="Brandon R.C."/>
            <person name="Fine L.D."/>
            <person name="Fritchman J.L."/>
            <person name="Fuhrmann J.L."/>
            <person name="Geoghagen N.S.M."/>
            <person name="Gnehm C.L."/>
            <person name="McDonald L.A."/>
            <person name="Small K.V."/>
            <person name="Fraser C.M."/>
            <person name="Smith H.O."/>
            <person name="Venter J.C."/>
        </authorList>
    </citation>
    <scope>NUCLEOTIDE SEQUENCE [LARGE SCALE GENOMIC DNA]</scope>
    <source>
        <strain>ATCC 51907 / DSM 11121 / KW20 / Rd</strain>
    </source>
</reference>
<reference key="2">
    <citation type="journal article" date="2000" name="Electrophoresis">
        <title>Two-dimensional map of the proteome of Haemophilus influenzae.</title>
        <authorList>
            <person name="Langen H."/>
            <person name="Takacs B."/>
            <person name="Evers S."/>
            <person name="Berndt P."/>
            <person name="Lahm H.W."/>
            <person name="Wipf B."/>
            <person name="Gray C."/>
            <person name="Fountoulakis M."/>
        </authorList>
    </citation>
    <scope>IDENTIFICATION BY MASS SPECTROMETRY</scope>
    <source>
        <strain>ATCC 51907 / DSM 11121 / KW20 / Rd</strain>
    </source>
</reference>
<evidence type="ECO:0000255" key="1">
    <source>
        <dbReference type="HAMAP-Rule" id="MF_01208"/>
    </source>
</evidence>
<comment type="function">
    <text evidence="1">Catalyzes the transfer of a ribosyl phosphate group from 5-phosphoribose 1-diphosphate to orotate, leading to the formation of orotidine monophosphate (OMP).</text>
</comment>
<comment type="catalytic activity">
    <reaction evidence="1">
        <text>orotidine 5'-phosphate + diphosphate = orotate + 5-phospho-alpha-D-ribose 1-diphosphate</text>
        <dbReference type="Rhea" id="RHEA:10380"/>
        <dbReference type="ChEBI" id="CHEBI:30839"/>
        <dbReference type="ChEBI" id="CHEBI:33019"/>
        <dbReference type="ChEBI" id="CHEBI:57538"/>
        <dbReference type="ChEBI" id="CHEBI:58017"/>
        <dbReference type="EC" id="2.4.2.10"/>
    </reaction>
</comment>
<comment type="cofactor">
    <cofactor evidence="1">
        <name>Mg(2+)</name>
        <dbReference type="ChEBI" id="CHEBI:18420"/>
    </cofactor>
</comment>
<comment type="pathway">
    <text evidence="1">Pyrimidine metabolism; UMP biosynthesis via de novo pathway; UMP from orotate: step 1/2.</text>
</comment>
<comment type="subunit">
    <text evidence="1">Homodimer.</text>
</comment>
<comment type="similarity">
    <text evidence="1">Belongs to the purine/pyrimidine phosphoribosyltransferase family. PyrE subfamily.</text>
</comment>